<reference key="1">
    <citation type="submission" date="1994-09" db="EMBL/GenBank/DDBJ databases">
        <authorList>
            <person name="Smith D.R."/>
            <person name="Robison K."/>
        </authorList>
    </citation>
    <scope>NUCLEOTIDE SEQUENCE [GENOMIC DNA]</scope>
</reference>
<reference key="2">
    <citation type="journal article" date="2001" name="Nature">
        <title>Massive gene decay in the leprosy bacillus.</title>
        <authorList>
            <person name="Cole S.T."/>
            <person name="Eiglmeier K."/>
            <person name="Parkhill J."/>
            <person name="James K.D."/>
            <person name="Thomson N.R."/>
            <person name="Wheeler P.R."/>
            <person name="Honore N."/>
            <person name="Garnier T."/>
            <person name="Churcher C.M."/>
            <person name="Harris D.E."/>
            <person name="Mungall K.L."/>
            <person name="Basham D."/>
            <person name="Brown D."/>
            <person name="Chillingworth T."/>
            <person name="Connor R."/>
            <person name="Davies R.M."/>
            <person name="Devlin K."/>
            <person name="Duthoy S."/>
            <person name="Feltwell T."/>
            <person name="Fraser A."/>
            <person name="Hamlin N."/>
            <person name="Holroyd S."/>
            <person name="Hornsby T."/>
            <person name="Jagels K."/>
            <person name="Lacroix C."/>
            <person name="Maclean J."/>
            <person name="Moule S."/>
            <person name="Murphy L.D."/>
            <person name="Oliver K."/>
            <person name="Quail M.A."/>
            <person name="Rajandream M.A."/>
            <person name="Rutherford K.M."/>
            <person name="Rutter S."/>
            <person name="Seeger K."/>
            <person name="Simon S."/>
            <person name="Simmonds M."/>
            <person name="Skelton J."/>
            <person name="Squares R."/>
            <person name="Squares S."/>
            <person name="Stevens K."/>
            <person name="Taylor K."/>
            <person name="Whitehead S."/>
            <person name="Woodward J.R."/>
            <person name="Barrell B.G."/>
        </authorList>
    </citation>
    <scope>NUCLEOTIDE SEQUENCE [LARGE SCALE GENOMIC DNA]</scope>
    <source>
        <strain>TN</strain>
    </source>
</reference>
<name>Y1167_MYCLE</name>
<proteinExistence type="inferred from homology"/>
<sequence>MILMAAPMNSITDISGIQVGHYHRLDPDASLGAGWACGVTVVLTPPGTVGAVDCRGGVPGTRETDLLDPANSVRFVDAVLLAGGSAYGLAAADGVMRWLEEHERGVVMLGGVVPIVPGAVIFDLSVGDFHCRPTAEFGYLACQAAYDAAVGGQDATVAVGTVGAGVGARAGVLKGGVGTASITLESGPTVGAVVVVNSVGDVVDRATGLPWMTDLIDEFALRPPSPEQIAGFAQLKSPLSALNTTIGVVATDATLSPAACQRVAMAAQDGLARTIRPAHTALDGDTVFALATGAVEATATADVPVAMSPETGLITEVGAAADDCLARAVLVAVLAAESVAGIPTYCGMFPGAFGTTIGGGNR</sequence>
<protein>
    <recommendedName>
        <fullName>Uncharacterized aminopeptidase ML1167</fullName>
        <ecNumber evidence="1">3.4.11.-</ecNumber>
    </recommendedName>
</protein>
<keyword id="KW-0031">Aminopeptidase</keyword>
<keyword id="KW-1003">Cell membrane</keyword>
<keyword id="KW-0378">Hydrolase</keyword>
<keyword id="KW-0472">Membrane</keyword>
<keyword id="KW-0645">Protease</keyword>
<keyword id="KW-1185">Reference proteome</keyword>
<keyword id="KW-0812">Transmembrane</keyword>
<keyword id="KW-1133">Transmembrane helix</keyword>
<gene>
    <name type="ordered locus">ML1167</name>
    <name type="ORF">B1549_C2_208</name>
</gene>
<feature type="chain" id="PRO_0000103810" description="Uncharacterized aminopeptidase ML1167">
    <location>
        <begin position="1"/>
        <end position="362"/>
    </location>
</feature>
<feature type="transmembrane region" description="Helical" evidence="2">
    <location>
        <begin position="32"/>
        <end position="52"/>
    </location>
</feature>
<feature type="transmembrane region" description="Helical" evidence="2">
    <location>
        <begin position="75"/>
        <end position="95"/>
    </location>
</feature>
<feature type="transmembrane region" description="Helical" evidence="2">
    <location>
        <begin position="106"/>
        <end position="126"/>
    </location>
</feature>
<feature type="transmembrane region" description="Helical" evidence="2">
    <location>
        <begin position="148"/>
        <end position="168"/>
    </location>
</feature>
<feature type="transmembrane region" description="Helical" evidence="2">
    <location>
        <begin position="176"/>
        <end position="196"/>
    </location>
</feature>
<feature type="transmembrane region" description="Helical" evidence="2">
    <location>
        <begin position="287"/>
        <end position="307"/>
    </location>
</feature>
<feature type="transmembrane region" description="Helical" evidence="2">
    <location>
        <begin position="329"/>
        <end position="349"/>
    </location>
</feature>
<evidence type="ECO:0000250" key="1">
    <source>
        <dbReference type="UniProtKB" id="Q52VH2"/>
    </source>
</evidence>
<evidence type="ECO:0000255" key="2"/>
<evidence type="ECO:0000305" key="3"/>
<organism>
    <name type="scientific">Mycobacterium leprae (strain TN)</name>
    <dbReference type="NCBI Taxonomy" id="272631"/>
    <lineage>
        <taxon>Bacteria</taxon>
        <taxon>Bacillati</taxon>
        <taxon>Actinomycetota</taxon>
        <taxon>Actinomycetes</taxon>
        <taxon>Mycobacteriales</taxon>
        <taxon>Mycobacteriaceae</taxon>
        <taxon>Mycobacterium</taxon>
    </lineage>
</organism>
<accession>P53425</accession>
<dbReference type="EC" id="3.4.11.-" evidence="1"/>
<dbReference type="EMBL" id="U00014">
    <property type="protein sequence ID" value="AAA50889.1"/>
    <property type="molecule type" value="Genomic_DNA"/>
</dbReference>
<dbReference type="EMBL" id="AL583921">
    <property type="protein sequence ID" value="CAC31548.1"/>
    <property type="molecule type" value="Genomic_DNA"/>
</dbReference>
<dbReference type="PIR" id="S72794">
    <property type="entry name" value="S72794"/>
</dbReference>
<dbReference type="RefSeq" id="NP_301852.1">
    <property type="nucleotide sequence ID" value="NC_002677.1"/>
</dbReference>
<dbReference type="SMR" id="P53425"/>
<dbReference type="STRING" id="272631.gene:17574997"/>
<dbReference type="MEROPS" id="P01.101"/>
<dbReference type="KEGG" id="mle:ML1167"/>
<dbReference type="PATRIC" id="fig|272631.5.peg.2122"/>
<dbReference type="Leproma" id="ML1167"/>
<dbReference type="eggNOG" id="COG3191">
    <property type="taxonomic scope" value="Bacteria"/>
</dbReference>
<dbReference type="HOGENOM" id="CLU_044458_1_0_11"/>
<dbReference type="OrthoDB" id="9808347at2"/>
<dbReference type="Proteomes" id="UP000000806">
    <property type="component" value="Chromosome"/>
</dbReference>
<dbReference type="GO" id="GO:0005886">
    <property type="term" value="C:plasma membrane"/>
    <property type="evidence" value="ECO:0007669"/>
    <property type="project" value="UniProtKB-SubCell"/>
</dbReference>
<dbReference type="GO" id="GO:0004177">
    <property type="term" value="F:aminopeptidase activity"/>
    <property type="evidence" value="ECO:0007669"/>
    <property type="project" value="UniProtKB-KW"/>
</dbReference>
<dbReference type="GO" id="GO:0006508">
    <property type="term" value="P:proteolysis"/>
    <property type="evidence" value="ECO:0007669"/>
    <property type="project" value="UniProtKB-KW"/>
</dbReference>
<dbReference type="CDD" id="cd02252">
    <property type="entry name" value="nylC_like"/>
    <property type="match status" value="1"/>
</dbReference>
<dbReference type="FunFam" id="3.60.70.12:FF:000003">
    <property type="entry name" value="Putative cysteine transferase"/>
    <property type="match status" value="1"/>
</dbReference>
<dbReference type="Gene3D" id="3.60.70.12">
    <property type="entry name" value="L-amino peptidase D-ALA esterase/amidase"/>
    <property type="match status" value="1"/>
</dbReference>
<dbReference type="InterPro" id="IPR016117">
    <property type="entry name" value="ArgJ-like_dom_sf"/>
</dbReference>
<dbReference type="InterPro" id="IPR005321">
    <property type="entry name" value="Peptidase_S58_DmpA"/>
</dbReference>
<dbReference type="PANTHER" id="PTHR36512:SF3">
    <property type="entry name" value="BLR5678 PROTEIN"/>
    <property type="match status" value="1"/>
</dbReference>
<dbReference type="PANTHER" id="PTHR36512">
    <property type="entry name" value="D-AMINOPEPTIDASE"/>
    <property type="match status" value="1"/>
</dbReference>
<dbReference type="Pfam" id="PF03576">
    <property type="entry name" value="Peptidase_S58"/>
    <property type="match status" value="1"/>
</dbReference>
<dbReference type="SUPFAM" id="SSF56266">
    <property type="entry name" value="DmpA/ArgJ-like"/>
    <property type="match status" value="1"/>
</dbReference>
<comment type="function">
    <text evidence="1">Aminopeptidase.</text>
</comment>
<comment type="subcellular location">
    <subcellularLocation>
        <location evidence="3">Cell membrane</location>
        <topology evidence="3">Multi-pass membrane protein</topology>
    </subcellularLocation>
</comment>
<comment type="similarity">
    <text evidence="3">Belongs to the peptidase S58 family.</text>
</comment>